<feature type="chain" id="PRO_0000287534" description="RING finger protein 215">
    <location>
        <begin position="1"/>
        <end position="377"/>
    </location>
</feature>
<feature type="topological domain" description="Cytoplasmic" evidence="1">
    <location>
        <begin position="1"/>
        <end position="22"/>
    </location>
</feature>
<feature type="transmembrane region" description="Helical" evidence="1">
    <location>
        <begin position="23"/>
        <end position="43"/>
    </location>
</feature>
<feature type="topological domain" description="Extracellular" evidence="1">
    <location>
        <begin position="44"/>
        <end position="250"/>
    </location>
</feature>
<feature type="transmembrane region" description="Helical" evidence="1">
    <location>
        <begin position="251"/>
        <end position="271"/>
    </location>
</feature>
<feature type="topological domain" description="Cytoplasmic" evidence="1">
    <location>
        <begin position="272"/>
        <end position="377"/>
    </location>
</feature>
<feature type="zinc finger region" description="RING-type; atypical" evidence="2">
    <location>
        <begin position="325"/>
        <end position="366"/>
    </location>
</feature>
<feature type="region of interest" description="Disordered" evidence="3">
    <location>
        <begin position="1"/>
        <end position="22"/>
    </location>
</feature>
<feature type="compositionally biased region" description="Pro residues" evidence="3">
    <location>
        <begin position="10"/>
        <end position="22"/>
    </location>
</feature>
<feature type="glycosylation site" description="N-linked (GlcNAc...) asparagine" evidence="1">
    <location>
        <position position="186"/>
    </location>
</feature>
<feature type="sequence variant" id="VAR_032319" description="In dbSNP:rs5749088.">
    <original>A</original>
    <variation>T</variation>
    <location>
        <position position="322"/>
    </location>
</feature>
<accession>Q9Y6U7</accession>
<accession>A6NEL1</accession>
<name>RN215_HUMAN</name>
<proteinExistence type="predicted"/>
<sequence>MGPAARPALRSPPPPPPPPPSPLLLLLPLLPLWLGLAGPGAAADGSEPAAGAGRGGARAVRVDVRLPRQDALVLEGVRIGSEADPAPLLGGRLLLMDIVDAEQEAPVEGWIAVAYVGKEQAAQFHQENKGSGPQAYPKALVQQMRRALFLGASALLLLILNHNVVRELDISQLLLRPVIVLHYSSNVTKLLDALLQRTQATAEITSGESLSANIEWKLTLWTTCGLSKDGYGGWQDLVCLGGSRAQEQKPLQQLWNAILLVAMLLCTGLVVQAQRQASRQSQRELGGQVDLFKRRVVRRLASLKTRRCRLSRAAQGLPDPGAETCAVCLDYFCNKQWLRVLPCKHEFHRDCVDPWLMLQQTCPLCKFNVLGNRYSDD</sequence>
<gene>
    <name type="primary">RNF215</name>
</gene>
<organism>
    <name type="scientific">Homo sapiens</name>
    <name type="common">Human</name>
    <dbReference type="NCBI Taxonomy" id="9606"/>
    <lineage>
        <taxon>Eukaryota</taxon>
        <taxon>Metazoa</taxon>
        <taxon>Chordata</taxon>
        <taxon>Craniata</taxon>
        <taxon>Vertebrata</taxon>
        <taxon>Euteleostomi</taxon>
        <taxon>Mammalia</taxon>
        <taxon>Eutheria</taxon>
        <taxon>Euarchontoglires</taxon>
        <taxon>Primates</taxon>
        <taxon>Haplorrhini</taxon>
        <taxon>Catarrhini</taxon>
        <taxon>Hominidae</taxon>
        <taxon>Homo</taxon>
    </lineage>
</organism>
<reference key="1">
    <citation type="journal article" date="1999" name="Nature">
        <title>The DNA sequence of human chromosome 22.</title>
        <authorList>
            <person name="Dunham I."/>
            <person name="Hunt A.R."/>
            <person name="Collins J.E."/>
            <person name="Bruskiewich R."/>
            <person name="Beare D.M."/>
            <person name="Clamp M."/>
            <person name="Smink L.J."/>
            <person name="Ainscough R."/>
            <person name="Almeida J.P."/>
            <person name="Babbage A.K."/>
            <person name="Bagguley C."/>
            <person name="Bailey J."/>
            <person name="Barlow K.F."/>
            <person name="Bates K.N."/>
            <person name="Beasley O.P."/>
            <person name="Bird C.P."/>
            <person name="Blakey S.E."/>
            <person name="Bridgeman A.M."/>
            <person name="Buck D."/>
            <person name="Burgess J."/>
            <person name="Burrill W.D."/>
            <person name="Burton J."/>
            <person name="Carder C."/>
            <person name="Carter N.P."/>
            <person name="Chen Y."/>
            <person name="Clark G."/>
            <person name="Clegg S.M."/>
            <person name="Cobley V.E."/>
            <person name="Cole C.G."/>
            <person name="Collier R.E."/>
            <person name="Connor R."/>
            <person name="Conroy D."/>
            <person name="Corby N.R."/>
            <person name="Coville G.J."/>
            <person name="Cox A.V."/>
            <person name="Davis J."/>
            <person name="Dawson E."/>
            <person name="Dhami P.D."/>
            <person name="Dockree C."/>
            <person name="Dodsworth S.J."/>
            <person name="Durbin R.M."/>
            <person name="Ellington A.G."/>
            <person name="Evans K.L."/>
            <person name="Fey J.M."/>
            <person name="Fleming K."/>
            <person name="French L."/>
            <person name="Garner A.A."/>
            <person name="Gilbert J.G.R."/>
            <person name="Goward M.E."/>
            <person name="Grafham D.V."/>
            <person name="Griffiths M.N.D."/>
            <person name="Hall C."/>
            <person name="Hall R.E."/>
            <person name="Hall-Tamlyn G."/>
            <person name="Heathcott R.W."/>
            <person name="Ho S."/>
            <person name="Holmes S."/>
            <person name="Hunt S.E."/>
            <person name="Jones M.C."/>
            <person name="Kershaw J."/>
            <person name="Kimberley A.M."/>
            <person name="King A."/>
            <person name="Laird G.K."/>
            <person name="Langford C.F."/>
            <person name="Leversha M.A."/>
            <person name="Lloyd C."/>
            <person name="Lloyd D.M."/>
            <person name="Martyn I.D."/>
            <person name="Mashreghi-Mohammadi M."/>
            <person name="Matthews L.H."/>
            <person name="Mccann O.T."/>
            <person name="Mcclay J."/>
            <person name="Mclaren S."/>
            <person name="McMurray A.A."/>
            <person name="Milne S.A."/>
            <person name="Mortimore B.J."/>
            <person name="Odell C.N."/>
            <person name="Pavitt R."/>
            <person name="Pearce A.V."/>
            <person name="Pearson D."/>
            <person name="Phillimore B.J.C.T."/>
            <person name="Phillips S.H."/>
            <person name="Plumb R.W."/>
            <person name="Ramsay H."/>
            <person name="Ramsey Y."/>
            <person name="Rogers L."/>
            <person name="Ross M.T."/>
            <person name="Scott C.E."/>
            <person name="Sehra H.K."/>
            <person name="Skuce C.D."/>
            <person name="Smalley S."/>
            <person name="Smith M.L."/>
            <person name="Soderlund C."/>
            <person name="Spragon L."/>
            <person name="Steward C.A."/>
            <person name="Sulston J.E."/>
            <person name="Swann R.M."/>
            <person name="Vaudin M."/>
            <person name="Wall M."/>
            <person name="Wallis J.M."/>
            <person name="Whiteley M.N."/>
            <person name="Willey D.L."/>
            <person name="Williams L."/>
            <person name="Williams S.A."/>
            <person name="Williamson H."/>
            <person name="Wilmer T.E."/>
            <person name="Wilming L."/>
            <person name="Wright C.L."/>
            <person name="Hubbard T."/>
            <person name="Bentley D.R."/>
            <person name="Beck S."/>
            <person name="Rogers J."/>
            <person name="Shimizu N."/>
            <person name="Minoshima S."/>
            <person name="Kawasaki K."/>
            <person name="Sasaki T."/>
            <person name="Asakawa S."/>
            <person name="Kudoh J."/>
            <person name="Shintani A."/>
            <person name="Shibuya K."/>
            <person name="Yoshizaki Y."/>
            <person name="Aoki N."/>
            <person name="Mitsuyama S."/>
            <person name="Roe B.A."/>
            <person name="Chen F."/>
            <person name="Chu L."/>
            <person name="Crabtree J."/>
            <person name="Deschamps S."/>
            <person name="Do A."/>
            <person name="Do T."/>
            <person name="Dorman A."/>
            <person name="Fang F."/>
            <person name="Fu Y."/>
            <person name="Hu P."/>
            <person name="Hua A."/>
            <person name="Kenton S."/>
            <person name="Lai H."/>
            <person name="Lao H.I."/>
            <person name="Lewis J."/>
            <person name="Lewis S."/>
            <person name="Lin S.-P."/>
            <person name="Loh P."/>
            <person name="Malaj E."/>
            <person name="Nguyen T."/>
            <person name="Pan H."/>
            <person name="Phan S."/>
            <person name="Qi S."/>
            <person name="Qian Y."/>
            <person name="Ray L."/>
            <person name="Ren Q."/>
            <person name="Shaull S."/>
            <person name="Sloan D."/>
            <person name="Song L."/>
            <person name="Wang Q."/>
            <person name="Wang Y."/>
            <person name="Wang Z."/>
            <person name="White J."/>
            <person name="Willingham D."/>
            <person name="Wu H."/>
            <person name="Yao Z."/>
            <person name="Zhan M."/>
            <person name="Zhang G."/>
            <person name="Chissoe S."/>
            <person name="Murray J."/>
            <person name="Miller N."/>
            <person name="Minx P."/>
            <person name="Fulton R."/>
            <person name="Johnson D."/>
            <person name="Bemis G."/>
            <person name="Bentley D."/>
            <person name="Bradshaw H."/>
            <person name="Bourne S."/>
            <person name="Cordes M."/>
            <person name="Du Z."/>
            <person name="Fulton L."/>
            <person name="Goela D."/>
            <person name="Graves T."/>
            <person name="Hawkins J."/>
            <person name="Hinds K."/>
            <person name="Kemp K."/>
            <person name="Latreille P."/>
            <person name="Layman D."/>
            <person name="Ozersky P."/>
            <person name="Rohlfing T."/>
            <person name="Scheet P."/>
            <person name="Walker C."/>
            <person name="Wamsley A."/>
            <person name="Wohldmann P."/>
            <person name="Pepin K."/>
            <person name="Nelson J."/>
            <person name="Korf I."/>
            <person name="Bedell J.A."/>
            <person name="Hillier L.W."/>
            <person name="Mardis E."/>
            <person name="Waterston R."/>
            <person name="Wilson R."/>
            <person name="Emanuel B.S."/>
            <person name="Shaikh T."/>
            <person name="Kurahashi H."/>
            <person name="Saitta S."/>
            <person name="Budarf M.L."/>
            <person name="McDermid H.E."/>
            <person name="Johnson A."/>
            <person name="Wong A.C.C."/>
            <person name="Morrow B.E."/>
            <person name="Edelmann L."/>
            <person name="Kim U.J."/>
            <person name="Shizuya H."/>
            <person name="Simon M.I."/>
            <person name="Dumanski J.P."/>
            <person name="Peyrard M."/>
            <person name="Kedra D."/>
            <person name="Seroussi E."/>
            <person name="Fransson I."/>
            <person name="Tapia I."/>
            <person name="Bruder C.E."/>
            <person name="O'Brien K.P."/>
            <person name="Wilkinson P."/>
            <person name="Bodenteich A."/>
            <person name="Hartman K."/>
            <person name="Hu X."/>
            <person name="Khan A.S."/>
            <person name="Lane L."/>
            <person name="Tilahun Y."/>
            <person name="Wright H."/>
        </authorList>
    </citation>
    <scope>NUCLEOTIDE SEQUENCE [LARGE SCALE GENOMIC DNA]</scope>
</reference>
<comment type="subcellular location">
    <subcellularLocation>
        <location evidence="4">Membrane</location>
        <topology evidence="4">Multi-pass membrane protein</topology>
    </subcellularLocation>
</comment>
<comment type="sequence caution" evidence="4">
    <conflict type="erroneous gene model prediction">
        <sequence resource="EMBL-CDS" id="AAD43187"/>
    </conflict>
</comment>
<protein>
    <recommendedName>
        <fullName>RING finger protein 215</fullName>
    </recommendedName>
</protein>
<evidence type="ECO:0000255" key="1"/>
<evidence type="ECO:0000255" key="2">
    <source>
        <dbReference type="PROSITE-ProRule" id="PRU00175"/>
    </source>
</evidence>
<evidence type="ECO:0000256" key="3">
    <source>
        <dbReference type="SAM" id="MobiDB-lite"/>
    </source>
</evidence>
<evidence type="ECO:0000305" key="4"/>
<dbReference type="EMBL" id="AC004997">
    <property type="protein sequence ID" value="AAD43187.1"/>
    <property type="status" value="ALT_SEQ"/>
    <property type="molecule type" value="Genomic_DNA"/>
</dbReference>
<dbReference type="CCDS" id="CCDS33633.1"/>
<dbReference type="RefSeq" id="NP_001017981.1">
    <property type="nucleotide sequence ID" value="NM_001017981.2"/>
</dbReference>
<dbReference type="SMR" id="Q9Y6U7"/>
<dbReference type="BioGRID" id="128317">
    <property type="interactions" value="6"/>
</dbReference>
<dbReference type="FunCoup" id="Q9Y6U7">
    <property type="interactions" value="739"/>
</dbReference>
<dbReference type="IntAct" id="Q9Y6U7">
    <property type="interactions" value="3"/>
</dbReference>
<dbReference type="STRING" id="9606.ENSP00000371800"/>
<dbReference type="GlyCosmos" id="Q9Y6U7">
    <property type="glycosylation" value="1 site, No reported glycans"/>
</dbReference>
<dbReference type="GlyGen" id="Q9Y6U7">
    <property type="glycosylation" value="1 site, 1 N-linked glycan (1 site)"/>
</dbReference>
<dbReference type="iPTMnet" id="Q9Y6U7"/>
<dbReference type="PhosphoSitePlus" id="Q9Y6U7"/>
<dbReference type="BioMuta" id="RNF215"/>
<dbReference type="DMDM" id="147732500"/>
<dbReference type="MassIVE" id="Q9Y6U7"/>
<dbReference type="PaxDb" id="9606-ENSP00000371800"/>
<dbReference type="PeptideAtlas" id="Q9Y6U7"/>
<dbReference type="ProteomicsDB" id="86792"/>
<dbReference type="Antibodypedia" id="24705">
    <property type="antibodies" value="98 antibodies from 14 providers"/>
</dbReference>
<dbReference type="DNASU" id="200312"/>
<dbReference type="Ensembl" id="ENST00000382363.8">
    <property type="protein sequence ID" value="ENSP00000371800.3"/>
    <property type="gene ID" value="ENSG00000099999.15"/>
</dbReference>
<dbReference type="GeneID" id="200312"/>
<dbReference type="KEGG" id="hsa:200312"/>
<dbReference type="MANE-Select" id="ENST00000382363.8">
    <property type="protein sequence ID" value="ENSP00000371800.3"/>
    <property type="RefSeq nucleotide sequence ID" value="NM_001017981.2"/>
    <property type="RefSeq protein sequence ID" value="NP_001017981.1"/>
</dbReference>
<dbReference type="UCSC" id="uc003ahp.4">
    <property type="organism name" value="human"/>
</dbReference>
<dbReference type="AGR" id="HGNC:33434"/>
<dbReference type="CTD" id="200312"/>
<dbReference type="DisGeNET" id="200312"/>
<dbReference type="GeneCards" id="RNF215"/>
<dbReference type="HGNC" id="HGNC:33434">
    <property type="gene designation" value="RNF215"/>
</dbReference>
<dbReference type="HPA" id="ENSG00000099999">
    <property type="expression patterns" value="Low tissue specificity"/>
</dbReference>
<dbReference type="neXtProt" id="NX_Q9Y6U7"/>
<dbReference type="PharmGKB" id="PA162401807"/>
<dbReference type="VEuPathDB" id="HostDB:ENSG00000099999"/>
<dbReference type="eggNOG" id="KOG0800">
    <property type="taxonomic scope" value="Eukaryota"/>
</dbReference>
<dbReference type="GeneTree" id="ENSGT00940000159671"/>
<dbReference type="HOGENOM" id="CLU_049329_0_0_1"/>
<dbReference type="InParanoid" id="Q9Y6U7"/>
<dbReference type="OMA" id="GAQAYPK"/>
<dbReference type="OrthoDB" id="8062037at2759"/>
<dbReference type="PAN-GO" id="Q9Y6U7">
    <property type="GO annotations" value="8 GO annotations based on evolutionary models"/>
</dbReference>
<dbReference type="PhylomeDB" id="Q9Y6U7"/>
<dbReference type="TreeFam" id="TF317074"/>
<dbReference type="PathwayCommons" id="Q9Y6U7"/>
<dbReference type="SignaLink" id="Q9Y6U7"/>
<dbReference type="SIGNOR" id="Q9Y6U7"/>
<dbReference type="BioGRID-ORCS" id="200312">
    <property type="hits" value="9 hits in 1195 CRISPR screens"/>
</dbReference>
<dbReference type="GenomeRNAi" id="200312"/>
<dbReference type="Pharos" id="Q9Y6U7">
    <property type="development level" value="Tdark"/>
</dbReference>
<dbReference type="PRO" id="PR:Q9Y6U7"/>
<dbReference type="Proteomes" id="UP000005640">
    <property type="component" value="Chromosome 22"/>
</dbReference>
<dbReference type="RNAct" id="Q9Y6U7">
    <property type="molecule type" value="protein"/>
</dbReference>
<dbReference type="Bgee" id="ENSG00000099999">
    <property type="expression patterns" value="Expressed in right hemisphere of cerebellum and 106 other cell types or tissues"/>
</dbReference>
<dbReference type="ExpressionAtlas" id="Q9Y6U7">
    <property type="expression patterns" value="baseline and differential"/>
</dbReference>
<dbReference type="GO" id="GO:0005737">
    <property type="term" value="C:cytoplasm"/>
    <property type="evidence" value="ECO:0000318"/>
    <property type="project" value="GO_Central"/>
</dbReference>
<dbReference type="GO" id="GO:0016020">
    <property type="term" value="C:membrane"/>
    <property type="evidence" value="ECO:0007669"/>
    <property type="project" value="UniProtKB-SubCell"/>
</dbReference>
<dbReference type="GO" id="GO:0061630">
    <property type="term" value="F:ubiquitin protein ligase activity"/>
    <property type="evidence" value="ECO:0000318"/>
    <property type="project" value="GO_Central"/>
</dbReference>
<dbReference type="GO" id="GO:0008270">
    <property type="term" value="F:zinc ion binding"/>
    <property type="evidence" value="ECO:0007669"/>
    <property type="project" value="UniProtKB-KW"/>
</dbReference>
<dbReference type="GO" id="GO:0006511">
    <property type="term" value="P:ubiquitin-dependent protein catabolic process"/>
    <property type="evidence" value="ECO:0000318"/>
    <property type="project" value="GO_Central"/>
</dbReference>
<dbReference type="CDD" id="cd16670">
    <property type="entry name" value="RING-H2_RNF215"/>
    <property type="match status" value="1"/>
</dbReference>
<dbReference type="FunFam" id="3.30.40.10:FF:000315">
    <property type="entry name" value="RING finger protein 215"/>
    <property type="match status" value="1"/>
</dbReference>
<dbReference type="FunFam" id="3.50.30.30:FF:000022">
    <property type="entry name" value="RING finger protein 215"/>
    <property type="match status" value="1"/>
</dbReference>
<dbReference type="Gene3D" id="3.50.30.30">
    <property type="match status" value="1"/>
</dbReference>
<dbReference type="Gene3D" id="3.30.40.10">
    <property type="entry name" value="Zinc/RING finger domain, C3HC4 (zinc finger)"/>
    <property type="match status" value="1"/>
</dbReference>
<dbReference type="InterPro" id="IPR001841">
    <property type="entry name" value="Znf_RING"/>
</dbReference>
<dbReference type="InterPro" id="IPR013083">
    <property type="entry name" value="Znf_RING/FYVE/PHD"/>
</dbReference>
<dbReference type="InterPro" id="IPR051073">
    <property type="entry name" value="ZNRF3_Arkadia_E3_ligases"/>
</dbReference>
<dbReference type="PANTHER" id="PTHR16200">
    <property type="entry name" value="RING ZINC FINGER"/>
    <property type="match status" value="1"/>
</dbReference>
<dbReference type="Pfam" id="PF13639">
    <property type="entry name" value="zf-RING_2"/>
    <property type="match status" value="1"/>
</dbReference>
<dbReference type="SMART" id="SM00184">
    <property type="entry name" value="RING"/>
    <property type="match status" value="1"/>
</dbReference>
<dbReference type="SUPFAM" id="SSF57850">
    <property type="entry name" value="RING/U-box"/>
    <property type="match status" value="1"/>
</dbReference>
<dbReference type="PROSITE" id="PS50089">
    <property type="entry name" value="ZF_RING_2"/>
    <property type="match status" value="1"/>
</dbReference>
<keyword id="KW-0325">Glycoprotein</keyword>
<keyword id="KW-0472">Membrane</keyword>
<keyword id="KW-0479">Metal-binding</keyword>
<keyword id="KW-1185">Reference proteome</keyword>
<keyword id="KW-0812">Transmembrane</keyword>
<keyword id="KW-1133">Transmembrane helix</keyword>
<keyword id="KW-0862">Zinc</keyword>
<keyword id="KW-0863">Zinc-finger</keyword>